<keyword id="KW-0030">Aminoacyl-tRNA synthetase</keyword>
<keyword id="KW-0067">ATP-binding</keyword>
<keyword id="KW-0963">Cytoplasm</keyword>
<keyword id="KW-0436">Ligase</keyword>
<keyword id="KW-0547">Nucleotide-binding</keyword>
<keyword id="KW-0648">Protein biosynthesis</keyword>
<gene>
    <name evidence="1" type="primary">proS</name>
    <name type="ordered locus">M6_Spy1681</name>
</gene>
<name>SYP_STRP6</name>
<evidence type="ECO:0000255" key="1">
    <source>
        <dbReference type="HAMAP-Rule" id="MF_01569"/>
    </source>
</evidence>
<reference key="1">
    <citation type="journal article" date="2004" name="J. Infect. Dis.">
        <title>Progress toward characterization of the group A Streptococcus metagenome: complete genome sequence of a macrolide-resistant serotype M6 strain.</title>
        <authorList>
            <person name="Banks D.J."/>
            <person name="Porcella S.F."/>
            <person name="Barbian K.D."/>
            <person name="Beres S.B."/>
            <person name="Philips L.E."/>
            <person name="Voyich J.M."/>
            <person name="DeLeo F.R."/>
            <person name="Martin J.M."/>
            <person name="Somerville G.A."/>
            <person name="Musser J.M."/>
        </authorList>
    </citation>
    <scope>NUCLEOTIDE SEQUENCE [LARGE SCALE GENOMIC DNA]</scope>
    <source>
        <strain>ATCC BAA-946 / MGAS10394</strain>
    </source>
</reference>
<sequence length="618" mass="68654">MKQSKLLIPTLREMPSDAQVISHALMVRAGYVRQVSAGIYAYLPLANRTIEKFKTIMREEFEKIGAVEMLAPALLTADLWRESGRYETYGEDLYKLKNRDNSDFILGPTHEETFTTLVRDAVKSYKQLPLNLYQIQSKYRDEKRPRNGLLRTREFIMKDGYSFHHNYEDLDVTYEDYRQAYEAIFTRAGLDFKGIIGDGGAMGGKDSQEFMAITPARTDLDRWVVLDKSIASMDDIPKEVLEEIKAELAAWMISGEDTIAYSTESSYAANLEMATNEYKPSSKVAAEDALAEVETPHCKTIDEVAAFLSVDETQTIKTLLFVADNEPVVALLVGNDHINTVKLKNYLAADFLEPASEEEARAFFGAGFGSLGPVNLAQGSRIVADRKVQNLTNAVAGANKDGFHVTGVNPGRDFQAEYVDIREVKEGEMSPDGHGVLQFARGIEVGHIFKLGTRYSDSMGAKILDENGRAVPIVMGCYGIGVSRILSAVIEQHARLFVNKTPKGDYRYAWGINFPKELAPFDVHLITVNVKDQAAQDLTAKLEADLMAKGYDVLTDDRNERVGSKFSDSDLIGLPIRVTVGKKAAEGIVEIKIKATGDSIEVNAENLIETLEILTKEH</sequence>
<feature type="chain" id="PRO_0000248787" description="Proline--tRNA ligase">
    <location>
        <begin position="1"/>
        <end position="618"/>
    </location>
</feature>
<protein>
    <recommendedName>
        <fullName evidence="1">Proline--tRNA ligase</fullName>
        <ecNumber evidence="1">6.1.1.15</ecNumber>
    </recommendedName>
    <alternativeName>
        <fullName evidence="1">Prolyl-tRNA synthetase</fullName>
        <shortName evidence="1">ProRS</shortName>
    </alternativeName>
</protein>
<accession>Q5X9U7</accession>
<dbReference type="EC" id="6.1.1.15" evidence="1"/>
<dbReference type="EMBL" id="CP000003">
    <property type="protein sequence ID" value="AAT87816.1"/>
    <property type="molecule type" value="Genomic_DNA"/>
</dbReference>
<dbReference type="RefSeq" id="WP_011184986.1">
    <property type="nucleotide sequence ID" value="NC_006086.1"/>
</dbReference>
<dbReference type="SMR" id="Q5X9U7"/>
<dbReference type="KEGG" id="spa:M6_Spy1681"/>
<dbReference type="HOGENOM" id="CLU_016739_0_0_9"/>
<dbReference type="Proteomes" id="UP000001167">
    <property type="component" value="Chromosome"/>
</dbReference>
<dbReference type="GO" id="GO:0005829">
    <property type="term" value="C:cytosol"/>
    <property type="evidence" value="ECO:0007669"/>
    <property type="project" value="TreeGrafter"/>
</dbReference>
<dbReference type="GO" id="GO:0002161">
    <property type="term" value="F:aminoacyl-tRNA deacylase activity"/>
    <property type="evidence" value="ECO:0007669"/>
    <property type="project" value="InterPro"/>
</dbReference>
<dbReference type="GO" id="GO:0005524">
    <property type="term" value="F:ATP binding"/>
    <property type="evidence" value="ECO:0007669"/>
    <property type="project" value="UniProtKB-UniRule"/>
</dbReference>
<dbReference type="GO" id="GO:0140096">
    <property type="term" value="F:catalytic activity, acting on a protein"/>
    <property type="evidence" value="ECO:0007669"/>
    <property type="project" value="UniProtKB-ARBA"/>
</dbReference>
<dbReference type="GO" id="GO:0004827">
    <property type="term" value="F:proline-tRNA ligase activity"/>
    <property type="evidence" value="ECO:0007669"/>
    <property type="project" value="UniProtKB-UniRule"/>
</dbReference>
<dbReference type="GO" id="GO:0016740">
    <property type="term" value="F:transferase activity"/>
    <property type="evidence" value="ECO:0007669"/>
    <property type="project" value="UniProtKB-ARBA"/>
</dbReference>
<dbReference type="GO" id="GO:0006433">
    <property type="term" value="P:prolyl-tRNA aminoacylation"/>
    <property type="evidence" value="ECO:0007669"/>
    <property type="project" value="UniProtKB-UniRule"/>
</dbReference>
<dbReference type="CDD" id="cd04334">
    <property type="entry name" value="ProRS-INS"/>
    <property type="match status" value="1"/>
</dbReference>
<dbReference type="CDD" id="cd00861">
    <property type="entry name" value="ProRS_anticodon_short"/>
    <property type="match status" value="1"/>
</dbReference>
<dbReference type="FunFam" id="3.40.50.800:FF:000011">
    <property type="entry name" value="Proline--tRNA ligase"/>
    <property type="match status" value="1"/>
</dbReference>
<dbReference type="Gene3D" id="3.40.50.800">
    <property type="entry name" value="Anticodon-binding domain"/>
    <property type="match status" value="1"/>
</dbReference>
<dbReference type="Gene3D" id="3.30.930.10">
    <property type="entry name" value="Bira Bifunctional Protein, Domain 2"/>
    <property type="match status" value="2"/>
</dbReference>
<dbReference type="Gene3D" id="3.90.960.10">
    <property type="entry name" value="YbaK/aminoacyl-tRNA synthetase-associated domain"/>
    <property type="match status" value="1"/>
</dbReference>
<dbReference type="HAMAP" id="MF_01569">
    <property type="entry name" value="Pro_tRNA_synth_type1"/>
    <property type="match status" value="1"/>
</dbReference>
<dbReference type="InterPro" id="IPR002314">
    <property type="entry name" value="aa-tRNA-synt_IIb"/>
</dbReference>
<dbReference type="InterPro" id="IPR006195">
    <property type="entry name" value="aa-tRNA-synth_II"/>
</dbReference>
<dbReference type="InterPro" id="IPR045864">
    <property type="entry name" value="aa-tRNA-synth_II/BPL/LPL"/>
</dbReference>
<dbReference type="InterPro" id="IPR004154">
    <property type="entry name" value="Anticodon-bd"/>
</dbReference>
<dbReference type="InterPro" id="IPR036621">
    <property type="entry name" value="Anticodon-bd_dom_sf"/>
</dbReference>
<dbReference type="InterPro" id="IPR002316">
    <property type="entry name" value="Pro-tRNA-ligase_IIa"/>
</dbReference>
<dbReference type="InterPro" id="IPR004500">
    <property type="entry name" value="Pro-tRNA-synth_IIa_bac-type"/>
</dbReference>
<dbReference type="InterPro" id="IPR023717">
    <property type="entry name" value="Pro-tRNA-Synthase_IIa_type1"/>
</dbReference>
<dbReference type="InterPro" id="IPR050062">
    <property type="entry name" value="Pro-tRNA_synthetase"/>
</dbReference>
<dbReference type="InterPro" id="IPR044140">
    <property type="entry name" value="ProRS_anticodon_short"/>
</dbReference>
<dbReference type="InterPro" id="IPR036754">
    <property type="entry name" value="YbaK/aa-tRNA-synt-asso_dom_sf"/>
</dbReference>
<dbReference type="InterPro" id="IPR007214">
    <property type="entry name" value="YbaK/aa-tRNA-synth-assoc-dom"/>
</dbReference>
<dbReference type="NCBIfam" id="NF006625">
    <property type="entry name" value="PRK09194.1"/>
    <property type="match status" value="1"/>
</dbReference>
<dbReference type="NCBIfam" id="TIGR00409">
    <property type="entry name" value="proS_fam_II"/>
    <property type="match status" value="2"/>
</dbReference>
<dbReference type="PANTHER" id="PTHR42753">
    <property type="entry name" value="MITOCHONDRIAL RIBOSOME PROTEIN L39/PROLYL-TRNA LIGASE FAMILY MEMBER"/>
    <property type="match status" value="1"/>
</dbReference>
<dbReference type="PANTHER" id="PTHR42753:SF2">
    <property type="entry name" value="PROLINE--TRNA LIGASE"/>
    <property type="match status" value="1"/>
</dbReference>
<dbReference type="Pfam" id="PF03129">
    <property type="entry name" value="HGTP_anticodon"/>
    <property type="match status" value="1"/>
</dbReference>
<dbReference type="Pfam" id="PF00587">
    <property type="entry name" value="tRNA-synt_2b"/>
    <property type="match status" value="1"/>
</dbReference>
<dbReference type="Pfam" id="PF04073">
    <property type="entry name" value="tRNA_edit"/>
    <property type="match status" value="1"/>
</dbReference>
<dbReference type="PRINTS" id="PR01046">
    <property type="entry name" value="TRNASYNTHPRO"/>
</dbReference>
<dbReference type="SUPFAM" id="SSF52954">
    <property type="entry name" value="Class II aaRS ABD-related"/>
    <property type="match status" value="1"/>
</dbReference>
<dbReference type="SUPFAM" id="SSF55681">
    <property type="entry name" value="Class II aaRS and biotin synthetases"/>
    <property type="match status" value="1"/>
</dbReference>
<dbReference type="SUPFAM" id="SSF55826">
    <property type="entry name" value="YbaK/ProRS associated domain"/>
    <property type="match status" value="1"/>
</dbReference>
<dbReference type="PROSITE" id="PS50862">
    <property type="entry name" value="AA_TRNA_LIGASE_II"/>
    <property type="match status" value="1"/>
</dbReference>
<comment type="function">
    <text evidence="1">Catalyzes the attachment of proline to tRNA(Pro) in a two-step reaction: proline is first activated by ATP to form Pro-AMP and then transferred to the acceptor end of tRNA(Pro). As ProRS can inadvertently accommodate and process non-cognate amino acids such as alanine and cysteine, to avoid such errors it has two additional distinct editing activities against alanine. One activity is designated as 'pretransfer' editing and involves the tRNA(Pro)-independent hydrolysis of activated Ala-AMP. The other activity is designated 'posttransfer' editing and involves deacylation of mischarged Ala-tRNA(Pro). The misacylated Cys-tRNA(Pro) is not edited by ProRS.</text>
</comment>
<comment type="catalytic activity">
    <reaction evidence="1">
        <text>tRNA(Pro) + L-proline + ATP = L-prolyl-tRNA(Pro) + AMP + diphosphate</text>
        <dbReference type="Rhea" id="RHEA:14305"/>
        <dbReference type="Rhea" id="RHEA-COMP:9700"/>
        <dbReference type="Rhea" id="RHEA-COMP:9702"/>
        <dbReference type="ChEBI" id="CHEBI:30616"/>
        <dbReference type="ChEBI" id="CHEBI:33019"/>
        <dbReference type="ChEBI" id="CHEBI:60039"/>
        <dbReference type="ChEBI" id="CHEBI:78442"/>
        <dbReference type="ChEBI" id="CHEBI:78532"/>
        <dbReference type="ChEBI" id="CHEBI:456215"/>
        <dbReference type="EC" id="6.1.1.15"/>
    </reaction>
</comment>
<comment type="subunit">
    <text evidence="1">Homodimer.</text>
</comment>
<comment type="subcellular location">
    <subcellularLocation>
        <location evidence="1">Cytoplasm</location>
    </subcellularLocation>
</comment>
<comment type="domain">
    <text evidence="1">Consists of three domains: the N-terminal catalytic domain, the editing domain and the C-terminal anticodon-binding domain.</text>
</comment>
<comment type="similarity">
    <text evidence="1">Belongs to the class-II aminoacyl-tRNA synthetase family. ProS type 1 subfamily.</text>
</comment>
<organism>
    <name type="scientific">Streptococcus pyogenes serotype M6 (strain ATCC BAA-946 / MGAS10394)</name>
    <dbReference type="NCBI Taxonomy" id="286636"/>
    <lineage>
        <taxon>Bacteria</taxon>
        <taxon>Bacillati</taxon>
        <taxon>Bacillota</taxon>
        <taxon>Bacilli</taxon>
        <taxon>Lactobacillales</taxon>
        <taxon>Streptococcaceae</taxon>
        <taxon>Streptococcus</taxon>
    </lineage>
</organism>
<proteinExistence type="inferred from homology"/>